<comment type="function">
    <text evidence="1">NAD-binding protein involved in the addition of a carboxymethylaminomethyl (cmnm) group at the wobble position (U34) of certain tRNAs, forming tRNA-cmnm(5)s(2)U34.</text>
</comment>
<comment type="cofactor">
    <cofactor evidence="1">
        <name>FAD</name>
        <dbReference type="ChEBI" id="CHEBI:57692"/>
    </cofactor>
</comment>
<comment type="subunit">
    <text evidence="1">Homodimer. Heterotetramer of two MnmE and two MnmG subunits.</text>
</comment>
<comment type="subcellular location">
    <subcellularLocation>
        <location evidence="1">Cytoplasm</location>
    </subcellularLocation>
</comment>
<comment type="similarity">
    <text evidence="1">Belongs to the MnmG family.</text>
</comment>
<comment type="sequence caution" evidence="2">
    <conflict type="erroneous initiation">
        <sequence resource="EMBL-CDS" id="AAM87686"/>
    </conflict>
</comment>
<comment type="sequence caution" evidence="2">
    <conflict type="erroneous initiation">
        <sequence resource="EMBL-CDS" id="AAS64176"/>
    </conflict>
</comment>
<gene>
    <name evidence="1" type="primary">mnmG</name>
    <name evidence="1" type="synonym">gidA</name>
    <name type="ordered locus">YPO4130</name>
    <name type="ordered locus">y4144</name>
    <name type="ordered locus">YP_4037</name>
</gene>
<accession>Q8Z9R8</accession>
<accession>Q0W9Q7</accession>
<name>MNMG_YERPE</name>
<keyword id="KW-0963">Cytoplasm</keyword>
<keyword id="KW-0274">FAD</keyword>
<keyword id="KW-0285">Flavoprotein</keyword>
<keyword id="KW-0520">NAD</keyword>
<keyword id="KW-1185">Reference proteome</keyword>
<keyword id="KW-0819">tRNA processing</keyword>
<protein>
    <recommendedName>
        <fullName evidence="1">tRNA uridine 5-carboxymethylaminomethyl modification enzyme MnmG</fullName>
    </recommendedName>
    <alternativeName>
        <fullName evidence="1">Glucose-inhibited division protein A</fullName>
    </alternativeName>
</protein>
<dbReference type="EMBL" id="AL590842">
    <property type="protein sequence ID" value="CAL22698.1"/>
    <property type="molecule type" value="Genomic_DNA"/>
</dbReference>
<dbReference type="EMBL" id="AE009952">
    <property type="protein sequence ID" value="AAM87686.1"/>
    <property type="status" value="ALT_INIT"/>
    <property type="molecule type" value="Genomic_DNA"/>
</dbReference>
<dbReference type="EMBL" id="AE017042">
    <property type="protein sequence ID" value="AAS64176.1"/>
    <property type="status" value="ALT_INIT"/>
    <property type="molecule type" value="Genomic_DNA"/>
</dbReference>
<dbReference type="PIR" id="AF0501">
    <property type="entry name" value="AF0501"/>
</dbReference>
<dbReference type="RefSeq" id="WP_002212259.1">
    <property type="nucleotide sequence ID" value="NZ_WUCM01000028.1"/>
</dbReference>
<dbReference type="RefSeq" id="YP_002348981.1">
    <property type="nucleotide sequence ID" value="NC_003143.1"/>
</dbReference>
<dbReference type="SMR" id="Q8Z9R8"/>
<dbReference type="IntAct" id="Q8Z9R8">
    <property type="interactions" value="7"/>
</dbReference>
<dbReference type="STRING" id="214092.YPO4130"/>
<dbReference type="PaxDb" id="214092-YPO4130"/>
<dbReference type="EnsemblBacteria" id="AAS64176">
    <property type="protein sequence ID" value="AAS64176"/>
    <property type="gene ID" value="YP_4037"/>
</dbReference>
<dbReference type="GeneID" id="57974594"/>
<dbReference type="KEGG" id="ype:YPO4130"/>
<dbReference type="KEGG" id="ypk:y4144"/>
<dbReference type="KEGG" id="ypm:YP_4037"/>
<dbReference type="PATRIC" id="fig|214092.21.peg.4675"/>
<dbReference type="eggNOG" id="COG0445">
    <property type="taxonomic scope" value="Bacteria"/>
</dbReference>
<dbReference type="HOGENOM" id="CLU_007831_2_2_6"/>
<dbReference type="OMA" id="CNPAMGG"/>
<dbReference type="OrthoDB" id="9815560at2"/>
<dbReference type="Proteomes" id="UP000000815">
    <property type="component" value="Chromosome"/>
</dbReference>
<dbReference type="Proteomes" id="UP000001019">
    <property type="component" value="Chromosome"/>
</dbReference>
<dbReference type="Proteomes" id="UP000002490">
    <property type="component" value="Chromosome"/>
</dbReference>
<dbReference type="GO" id="GO:0005829">
    <property type="term" value="C:cytosol"/>
    <property type="evidence" value="ECO:0000318"/>
    <property type="project" value="GO_Central"/>
</dbReference>
<dbReference type="GO" id="GO:0050660">
    <property type="term" value="F:flavin adenine dinucleotide binding"/>
    <property type="evidence" value="ECO:0000318"/>
    <property type="project" value="GO_Central"/>
</dbReference>
<dbReference type="GO" id="GO:0030488">
    <property type="term" value="P:tRNA methylation"/>
    <property type="evidence" value="ECO:0000318"/>
    <property type="project" value="GO_Central"/>
</dbReference>
<dbReference type="GO" id="GO:0002098">
    <property type="term" value="P:tRNA wobble uridine modification"/>
    <property type="evidence" value="ECO:0000318"/>
    <property type="project" value="GO_Central"/>
</dbReference>
<dbReference type="FunFam" id="1.10.10.1800:FF:000001">
    <property type="entry name" value="tRNA uridine 5-carboxymethylaminomethyl modification enzyme MnmG"/>
    <property type="match status" value="1"/>
</dbReference>
<dbReference type="FunFam" id="1.10.150.570:FF:000001">
    <property type="entry name" value="tRNA uridine 5-carboxymethylaminomethyl modification enzyme MnmG"/>
    <property type="match status" value="1"/>
</dbReference>
<dbReference type="FunFam" id="3.50.50.60:FF:000002">
    <property type="entry name" value="tRNA uridine 5-carboxymethylaminomethyl modification enzyme MnmG"/>
    <property type="match status" value="1"/>
</dbReference>
<dbReference type="FunFam" id="3.50.50.60:FF:000010">
    <property type="entry name" value="tRNA uridine 5-carboxymethylaminomethyl modification enzyme MnmG"/>
    <property type="match status" value="1"/>
</dbReference>
<dbReference type="Gene3D" id="3.50.50.60">
    <property type="entry name" value="FAD/NAD(P)-binding domain"/>
    <property type="match status" value="2"/>
</dbReference>
<dbReference type="Gene3D" id="1.10.150.570">
    <property type="entry name" value="GidA associated domain, C-terminal subdomain"/>
    <property type="match status" value="1"/>
</dbReference>
<dbReference type="Gene3D" id="1.10.10.1800">
    <property type="entry name" value="tRNA uridine 5-carboxymethylaminomethyl modification enzyme MnmG/GidA"/>
    <property type="match status" value="1"/>
</dbReference>
<dbReference type="HAMAP" id="MF_00129">
    <property type="entry name" value="MnmG_GidA"/>
    <property type="match status" value="1"/>
</dbReference>
<dbReference type="InterPro" id="IPR036188">
    <property type="entry name" value="FAD/NAD-bd_sf"/>
</dbReference>
<dbReference type="InterPro" id="IPR049312">
    <property type="entry name" value="GIDA_C_N"/>
</dbReference>
<dbReference type="InterPro" id="IPR004416">
    <property type="entry name" value="MnmG"/>
</dbReference>
<dbReference type="InterPro" id="IPR002218">
    <property type="entry name" value="MnmG-rel"/>
</dbReference>
<dbReference type="InterPro" id="IPR020595">
    <property type="entry name" value="MnmG-rel_CS"/>
</dbReference>
<dbReference type="InterPro" id="IPR026904">
    <property type="entry name" value="MnmG_C"/>
</dbReference>
<dbReference type="InterPro" id="IPR047001">
    <property type="entry name" value="MnmG_C_subdom"/>
</dbReference>
<dbReference type="InterPro" id="IPR044920">
    <property type="entry name" value="MnmG_C_subdom_sf"/>
</dbReference>
<dbReference type="InterPro" id="IPR040131">
    <property type="entry name" value="MnmG_N"/>
</dbReference>
<dbReference type="NCBIfam" id="TIGR00136">
    <property type="entry name" value="mnmG_gidA"/>
    <property type="match status" value="1"/>
</dbReference>
<dbReference type="PANTHER" id="PTHR11806">
    <property type="entry name" value="GLUCOSE INHIBITED DIVISION PROTEIN A"/>
    <property type="match status" value="1"/>
</dbReference>
<dbReference type="PANTHER" id="PTHR11806:SF0">
    <property type="entry name" value="PROTEIN MTO1 HOMOLOG, MITOCHONDRIAL"/>
    <property type="match status" value="1"/>
</dbReference>
<dbReference type="Pfam" id="PF01134">
    <property type="entry name" value="GIDA"/>
    <property type="match status" value="1"/>
</dbReference>
<dbReference type="Pfam" id="PF21680">
    <property type="entry name" value="GIDA_C_1st"/>
    <property type="match status" value="1"/>
</dbReference>
<dbReference type="Pfam" id="PF13932">
    <property type="entry name" value="SAM_GIDA_C"/>
    <property type="match status" value="1"/>
</dbReference>
<dbReference type="SMART" id="SM01228">
    <property type="entry name" value="GIDA_assoc_3"/>
    <property type="match status" value="1"/>
</dbReference>
<dbReference type="SUPFAM" id="SSF51905">
    <property type="entry name" value="FAD/NAD(P)-binding domain"/>
    <property type="match status" value="1"/>
</dbReference>
<dbReference type="PROSITE" id="PS01280">
    <property type="entry name" value="GIDA_1"/>
    <property type="match status" value="1"/>
</dbReference>
<dbReference type="PROSITE" id="PS01281">
    <property type="entry name" value="GIDA_2"/>
    <property type="match status" value="1"/>
</dbReference>
<sequence length="629" mass="70039">MFYPDQFDVIIIGGGHAGTEAAMAAARMGRQTLLLTHNIDTLGQMSCNPAIGGIGKGHLVKEIDALGGLMAKATDLAGIQFRILNASKGPAVRATRAQADRVLYRLAVRTALENQPNLMIFQQPVEDLIVENDRVVGAVTQMGLKFRAKAVVLTVGTFLDGKIHIGLENYSGGRAGDPPSISLSQRLRELPLRVNRLKTGTPPRIDARTIDFSQLTPQLGDTPIPVFSFLGNAEQHPEQMACHITYTNEKTHEVIRNNLDRSPMYAGIIEGIGPRYCPSIEDKVMRFADRNSHQIFLEPEGLTSNEIYPNGISTSLPFDVQMQIVRSMKGLENARIIRPGYAIEYDFFDPRDLKPTLESKYIQGLFFAGQINGTTGYEEAAAQGLLAGLNAGRFANEEDGWSPRRDEAYLGVLVDDLSTLGTKEPYRMFTSRAEYRLMLREDNADLRLTETGRKLGLVDDIRWAHFSQKVEQIEKERQRLRDIWVHPHSENVSEINALLKAPLSKEANGEELLRRPEIDYRLLTSLTSFGPALTDPQSADQVEIQVKYEGYITRQQEEIEKQLRNENTLLPVDLDYQQVSGLSNEVIAKLNDHKPSSIGQASRISGITPAAISILLVWLKKQGLLRRSA</sequence>
<organism>
    <name type="scientific">Yersinia pestis</name>
    <dbReference type="NCBI Taxonomy" id="632"/>
    <lineage>
        <taxon>Bacteria</taxon>
        <taxon>Pseudomonadati</taxon>
        <taxon>Pseudomonadota</taxon>
        <taxon>Gammaproteobacteria</taxon>
        <taxon>Enterobacterales</taxon>
        <taxon>Yersiniaceae</taxon>
        <taxon>Yersinia</taxon>
    </lineage>
</organism>
<reference key="1">
    <citation type="journal article" date="2001" name="Nature">
        <title>Genome sequence of Yersinia pestis, the causative agent of plague.</title>
        <authorList>
            <person name="Parkhill J."/>
            <person name="Wren B.W."/>
            <person name="Thomson N.R."/>
            <person name="Titball R.W."/>
            <person name="Holden M.T.G."/>
            <person name="Prentice M.B."/>
            <person name="Sebaihia M."/>
            <person name="James K.D."/>
            <person name="Churcher C.M."/>
            <person name="Mungall K.L."/>
            <person name="Baker S."/>
            <person name="Basham D."/>
            <person name="Bentley S.D."/>
            <person name="Brooks K."/>
            <person name="Cerdeno-Tarraga A.-M."/>
            <person name="Chillingworth T."/>
            <person name="Cronin A."/>
            <person name="Davies R.M."/>
            <person name="Davis P."/>
            <person name="Dougan G."/>
            <person name="Feltwell T."/>
            <person name="Hamlin N."/>
            <person name="Holroyd S."/>
            <person name="Jagels K."/>
            <person name="Karlyshev A.V."/>
            <person name="Leather S."/>
            <person name="Moule S."/>
            <person name="Oyston P.C.F."/>
            <person name="Quail M.A."/>
            <person name="Rutherford K.M."/>
            <person name="Simmonds M."/>
            <person name="Skelton J."/>
            <person name="Stevens K."/>
            <person name="Whitehead S."/>
            <person name="Barrell B.G."/>
        </authorList>
    </citation>
    <scope>NUCLEOTIDE SEQUENCE [LARGE SCALE GENOMIC DNA]</scope>
    <source>
        <strain>CO-92 / Biovar Orientalis</strain>
    </source>
</reference>
<reference key="2">
    <citation type="journal article" date="2002" name="J. Bacteriol.">
        <title>Genome sequence of Yersinia pestis KIM.</title>
        <authorList>
            <person name="Deng W."/>
            <person name="Burland V."/>
            <person name="Plunkett G. III"/>
            <person name="Boutin A."/>
            <person name="Mayhew G.F."/>
            <person name="Liss P."/>
            <person name="Perna N.T."/>
            <person name="Rose D.J."/>
            <person name="Mau B."/>
            <person name="Zhou S."/>
            <person name="Schwartz D.C."/>
            <person name="Fetherston J.D."/>
            <person name="Lindler L.E."/>
            <person name="Brubaker R.R."/>
            <person name="Plano G.V."/>
            <person name="Straley S.C."/>
            <person name="McDonough K.A."/>
            <person name="Nilles M.L."/>
            <person name="Matson J.S."/>
            <person name="Blattner F.R."/>
            <person name="Perry R.D."/>
        </authorList>
    </citation>
    <scope>NUCLEOTIDE SEQUENCE [LARGE SCALE GENOMIC DNA]</scope>
    <source>
        <strain>KIM10+ / Biovar Mediaevalis</strain>
    </source>
</reference>
<reference key="3">
    <citation type="journal article" date="2004" name="DNA Res.">
        <title>Complete genome sequence of Yersinia pestis strain 91001, an isolate avirulent to humans.</title>
        <authorList>
            <person name="Song Y."/>
            <person name="Tong Z."/>
            <person name="Wang J."/>
            <person name="Wang L."/>
            <person name="Guo Z."/>
            <person name="Han Y."/>
            <person name="Zhang J."/>
            <person name="Pei D."/>
            <person name="Zhou D."/>
            <person name="Qin H."/>
            <person name="Pang X."/>
            <person name="Han Y."/>
            <person name="Zhai J."/>
            <person name="Li M."/>
            <person name="Cui B."/>
            <person name="Qi Z."/>
            <person name="Jin L."/>
            <person name="Dai R."/>
            <person name="Chen F."/>
            <person name="Li S."/>
            <person name="Ye C."/>
            <person name="Du Z."/>
            <person name="Lin W."/>
            <person name="Wang J."/>
            <person name="Yu J."/>
            <person name="Yang H."/>
            <person name="Wang J."/>
            <person name="Huang P."/>
            <person name="Yang R."/>
        </authorList>
    </citation>
    <scope>NUCLEOTIDE SEQUENCE [LARGE SCALE GENOMIC DNA]</scope>
    <source>
        <strain>91001 / Biovar Mediaevalis</strain>
    </source>
</reference>
<proteinExistence type="inferred from homology"/>
<evidence type="ECO:0000255" key="1">
    <source>
        <dbReference type="HAMAP-Rule" id="MF_00129"/>
    </source>
</evidence>
<evidence type="ECO:0000305" key="2"/>
<feature type="chain" id="PRO_0000117223" description="tRNA uridine 5-carboxymethylaminomethyl modification enzyme MnmG">
    <location>
        <begin position="1"/>
        <end position="629"/>
    </location>
</feature>
<feature type="binding site" evidence="1">
    <location>
        <begin position="13"/>
        <end position="18"/>
    </location>
    <ligand>
        <name>FAD</name>
        <dbReference type="ChEBI" id="CHEBI:57692"/>
    </ligand>
</feature>
<feature type="binding site" evidence="1">
    <location>
        <position position="125"/>
    </location>
    <ligand>
        <name>FAD</name>
        <dbReference type="ChEBI" id="CHEBI:57692"/>
    </ligand>
</feature>
<feature type="binding site" evidence="1">
    <location>
        <position position="180"/>
    </location>
    <ligand>
        <name>FAD</name>
        <dbReference type="ChEBI" id="CHEBI:57692"/>
    </ligand>
</feature>
<feature type="binding site" evidence="1">
    <location>
        <begin position="273"/>
        <end position="287"/>
    </location>
    <ligand>
        <name>NAD(+)</name>
        <dbReference type="ChEBI" id="CHEBI:57540"/>
    </ligand>
</feature>
<feature type="binding site" evidence="1">
    <location>
        <position position="370"/>
    </location>
    <ligand>
        <name>FAD</name>
        <dbReference type="ChEBI" id="CHEBI:57692"/>
    </ligand>
</feature>